<organism>
    <name type="scientific">Vibrio vulnificus (strain CMCP6)</name>
    <dbReference type="NCBI Taxonomy" id="216895"/>
    <lineage>
        <taxon>Bacteria</taxon>
        <taxon>Pseudomonadati</taxon>
        <taxon>Pseudomonadota</taxon>
        <taxon>Gammaproteobacteria</taxon>
        <taxon>Vibrionales</taxon>
        <taxon>Vibrionaceae</taxon>
        <taxon>Vibrio</taxon>
    </lineage>
</organism>
<reference key="1">
    <citation type="submission" date="2002-12" db="EMBL/GenBank/DDBJ databases">
        <title>Complete genome sequence of Vibrio vulnificus CMCP6.</title>
        <authorList>
            <person name="Rhee J.H."/>
            <person name="Kim S.Y."/>
            <person name="Chung S.S."/>
            <person name="Kim J.J."/>
            <person name="Moon Y.H."/>
            <person name="Jeong H."/>
            <person name="Choy H.E."/>
        </authorList>
    </citation>
    <scope>NUCLEOTIDE SEQUENCE [LARGE SCALE GENOMIC DNA]</scope>
    <source>
        <strain>CMCP6</strain>
    </source>
</reference>
<name>RS13_VIBVU</name>
<dbReference type="EMBL" id="AE016795">
    <property type="protein sequence ID" value="AAO09248.1"/>
    <property type="molecule type" value="Genomic_DNA"/>
</dbReference>
<dbReference type="RefSeq" id="WP_011078812.1">
    <property type="nucleotide sequence ID" value="NC_004459.3"/>
</dbReference>
<dbReference type="SMR" id="Q8DE61"/>
<dbReference type="GeneID" id="93895044"/>
<dbReference type="KEGG" id="vvu:VV1_0739"/>
<dbReference type="HOGENOM" id="CLU_103849_1_2_6"/>
<dbReference type="Proteomes" id="UP000002275">
    <property type="component" value="Chromosome 1"/>
</dbReference>
<dbReference type="GO" id="GO:0005829">
    <property type="term" value="C:cytosol"/>
    <property type="evidence" value="ECO:0007669"/>
    <property type="project" value="TreeGrafter"/>
</dbReference>
<dbReference type="GO" id="GO:0015935">
    <property type="term" value="C:small ribosomal subunit"/>
    <property type="evidence" value="ECO:0007669"/>
    <property type="project" value="TreeGrafter"/>
</dbReference>
<dbReference type="GO" id="GO:0019843">
    <property type="term" value="F:rRNA binding"/>
    <property type="evidence" value="ECO:0007669"/>
    <property type="project" value="UniProtKB-UniRule"/>
</dbReference>
<dbReference type="GO" id="GO:0003735">
    <property type="term" value="F:structural constituent of ribosome"/>
    <property type="evidence" value="ECO:0007669"/>
    <property type="project" value="InterPro"/>
</dbReference>
<dbReference type="GO" id="GO:0000049">
    <property type="term" value="F:tRNA binding"/>
    <property type="evidence" value="ECO:0007669"/>
    <property type="project" value="UniProtKB-UniRule"/>
</dbReference>
<dbReference type="GO" id="GO:0006412">
    <property type="term" value="P:translation"/>
    <property type="evidence" value="ECO:0007669"/>
    <property type="project" value="UniProtKB-UniRule"/>
</dbReference>
<dbReference type="FunFam" id="1.10.8.50:FF:000001">
    <property type="entry name" value="30S ribosomal protein S13"/>
    <property type="match status" value="1"/>
</dbReference>
<dbReference type="FunFam" id="4.10.910.10:FF:000001">
    <property type="entry name" value="30S ribosomal protein S13"/>
    <property type="match status" value="1"/>
</dbReference>
<dbReference type="Gene3D" id="1.10.8.50">
    <property type="match status" value="1"/>
</dbReference>
<dbReference type="Gene3D" id="4.10.910.10">
    <property type="entry name" value="30s ribosomal protein s13, domain 2"/>
    <property type="match status" value="1"/>
</dbReference>
<dbReference type="HAMAP" id="MF_01315">
    <property type="entry name" value="Ribosomal_uS13"/>
    <property type="match status" value="1"/>
</dbReference>
<dbReference type="InterPro" id="IPR027437">
    <property type="entry name" value="Rbsml_uS13_C"/>
</dbReference>
<dbReference type="InterPro" id="IPR001892">
    <property type="entry name" value="Ribosomal_uS13"/>
</dbReference>
<dbReference type="InterPro" id="IPR010979">
    <property type="entry name" value="Ribosomal_uS13-like_H2TH"/>
</dbReference>
<dbReference type="InterPro" id="IPR019980">
    <property type="entry name" value="Ribosomal_uS13_bac-type"/>
</dbReference>
<dbReference type="InterPro" id="IPR018269">
    <property type="entry name" value="Ribosomal_uS13_CS"/>
</dbReference>
<dbReference type="NCBIfam" id="TIGR03631">
    <property type="entry name" value="uS13_bact"/>
    <property type="match status" value="1"/>
</dbReference>
<dbReference type="PANTHER" id="PTHR10871">
    <property type="entry name" value="30S RIBOSOMAL PROTEIN S13/40S RIBOSOMAL PROTEIN S18"/>
    <property type="match status" value="1"/>
</dbReference>
<dbReference type="PANTHER" id="PTHR10871:SF1">
    <property type="entry name" value="SMALL RIBOSOMAL SUBUNIT PROTEIN US13M"/>
    <property type="match status" value="1"/>
</dbReference>
<dbReference type="Pfam" id="PF00416">
    <property type="entry name" value="Ribosomal_S13"/>
    <property type="match status" value="1"/>
</dbReference>
<dbReference type="PIRSF" id="PIRSF002134">
    <property type="entry name" value="Ribosomal_S13"/>
    <property type="match status" value="1"/>
</dbReference>
<dbReference type="SUPFAM" id="SSF46946">
    <property type="entry name" value="S13-like H2TH domain"/>
    <property type="match status" value="1"/>
</dbReference>
<dbReference type="PROSITE" id="PS00646">
    <property type="entry name" value="RIBOSOMAL_S13_1"/>
    <property type="match status" value="1"/>
</dbReference>
<dbReference type="PROSITE" id="PS50159">
    <property type="entry name" value="RIBOSOMAL_S13_2"/>
    <property type="match status" value="1"/>
</dbReference>
<protein>
    <recommendedName>
        <fullName evidence="1">Small ribosomal subunit protein uS13</fullName>
    </recommendedName>
    <alternativeName>
        <fullName evidence="3">30S ribosomal protein S13</fullName>
    </alternativeName>
</protein>
<sequence length="118" mass="13277">MARIAGINIPDQKHAVIALTAIYGIGKTRSKAILADVGIAEDVKISELTEEQIDQLRDGVAKYTVEGDLRREVSMNIKRLMDLGCYRGLRHRRSLPLRGQRTKTNARTRKGPRKPIKK</sequence>
<comment type="function">
    <text evidence="1">Located at the top of the head of the 30S subunit, it contacts several helices of the 16S rRNA. In the 70S ribosome it contacts the 23S rRNA (bridge B1a) and protein L5 of the 50S subunit (bridge B1b), connecting the 2 subunits; these bridges are implicated in subunit movement. Contacts the tRNAs in the A and P-sites.</text>
</comment>
<comment type="subunit">
    <text evidence="1">Part of the 30S ribosomal subunit. Forms a loose heterodimer with protein S19. Forms two bridges to the 50S subunit in the 70S ribosome.</text>
</comment>
<comment type="similarity">
    <text evidence="1">Belongs to the universal ribosomal protein uS13 family.</text>
</comment>
<keyword id="KW-0687">Ribonucleoprotein</keyword>
<keyword id="KW-0689">Ribosomal protein</keyword>
<keyword id="KW-0694">RNA-binding</keyword>
<keyword id="KW-0699">rRNA-binding</keyword>
<keyword id="KW-0820">tRNA-binding</keyword>
<accession>Q8DE61</accession>
<proteinExistence type="inferred from homology"/>
<gene>
    <name evidence="1" type="primary">rpsM</name>
    <name type="ordered locus">VV1_0739</name>
</gene>
<evidence type="ECO:0000255" key="1">
    <source>
        <dbReference type="HAMAP-Rule" id="MF_01315"/>
    </source>
</evidence>
<evidence type="ECO:0000256" key="2">
    <source>
        <dbReference type="SAM" id="MobiDB-lite"/>
    </source>
</evidence>
<evidence type="ECO:0000305" key="3"/>
<feature type="chain" id="PRO_0000132168" description="Small ribosomal subunit protein uS13">
    <location>
        <begin position="1"/>
        <end position="118"/>
    </location>
</feature>
<feature type="region of interest" description="Disordered" evidence="2">
    <location>
        <begin position="94"/>
        <end position="118"/>
    </location>
</feature>